<accession>Q23192</accession>
<sequence length="263" mass="30391">MEIAFDLSTIFTDNIQRLTRTDLLKYGPKRYWAVAQSIDCLGEMSSKFHGWKRVITMYDKIVDHDEEQTTYIMWEKVNGSKSILKGLLRVGYKTLYLTDNEQNQYMEKAMCILDFFVVPTEQRSGNGFKMFDEMLKAENVTVDQCAFDKPSAALQQFLEKYYDRKDLVWQSNKYALCSNFFIGRHPTVPFTPRQTKRASRASSAVSSHASSRNTSPIGRNRPRHDSVADLMRQDMLAGVRAEVDPNSPTGLKNARDFGHRRIW</sequence>
<name>ATAT2_CAEEL</name>
<dbReference type="EC" id="2.3.1.108" evidence="1"/>
<dbReference type="EMBL" id="FO081143">
    <property type="protein sequence ID" value="CCD69460.1"/>
    <property type="molecule type" value="Genomic_DNA"/>
</dbReference>
<dbReference type="PIR" id="T26219">
    <property type="entry name" value="T26219"/>
</dbReference>
<dbReference type="RefSeq" id="NP_001379875.1">
    <property type="nucleotide sequence ID" value="NM_001392779.1"/>
</dbReference>
<dbReference type="RefSeq" id="NP_508981.1">
    <property type="nucleotide sequence ID" value="NM_076580.4"/>
</dbReference>
<dbReference type="PDB" id="8Y9F">
    <property type="method" value="EM"/>
    <property type="resolution" value="3.30 A"/>
    <property type="chains" value="C/I=1-263"/>
</dbReference>
<dbReference type="PDB" id="8YAJ">
    <property type="method" value="EM"/>
    <property type="resolution" value="3.20 A"/>
    <property type="chains" value="C/I=1-263"/>
</dbReference>
<dbReference type="PDB" id="8YAL">
    <property type="method" value="EM"/>
    <property type="resolution" value="3.10 A"/>
    <property type="chains" value="C/I=1-263"/>
</dbReference>
<dbReference type="PDB" id="8YAR">
    <property type="method" value="EM"/>
    <property type="resolution" value="3.60 A"/>
    <property type="chains" value="C/I=1-263"/>
</dbReference>
<dbReference type="PDBsum" id="8Y9F"/>
<dbReference type="PDBsum" id="8YAJ"/>
<dbReference type="PDBsum" id="8YAL"/>
<dbReference type="PDBsum" id="8YAR"/>
<dbReference type="EMDB" id="EMD-39076"/>
<dbReference type="EMDB" id="EMD-39100"/>
<dbReference type="EMDB" id="EMD-39102"/>
<dbReference type="EMDB" id="EMD-39105"/>
<dbReference type="SMR" id="Q23192"/>
<dbReference type="BioGRID" id="45785">
    <property type="interactions" value="3"/>
</dbReference>
<dbReference type="DIP" id="DIP-26342N"/>
<dbReference type="FunCoup" id="Q23192">
    <property type="interactions" value="327"/>
</dbReference>
<dbReference type="STRING" id="6239.W06B11.1.1"/>
<dbReference type="PaxDb" id="6239-W06B11.1"/>
<dbReference type="PeptideAtlas" id="Q23192"/>
<dbReference type="EnsemblMetazoa" id="W06B11.1.1">
    <property type="protein sequence ID" value="W06B11.1.1"/>
    <property type="gene ID" value="WBGene00021059"/>
</dbReference>
<dbReference type="GeneID" id="180852"/>
<dbReference type="UCSC" id="W06B11.1">
    <property type="organism name" value="c. elegans"/>
</dbReference>
<dbReference type="AGR" id="WB:WBGene00021059"/>
<dbReference type="WormBase" id="W06B11.1">
    <property type="protein sequence ID" value="CE28508"/>
    <property type="gene ID" value="WBGene00021059"/>
    <property type="gene designation" value="atat-2"/>
</dbReference>
<dbReference type="eggNOG" id="KOG4601">
    <property type="taxonomic scope" value="Eukaryota"/>
</dbReference>
<dbReference type="GeneTree" id="ENSGT00390000008276"/>
<dbReference type="HOGENOM" id="CLU_025013_2_1_1"/>
<dbReference type="InParanoid" id="Q23192"/>
<dbReference type="OMA" id="FFIGRHP"/>
<dbReference type="OrthoDB" id="447510at2759"/>
<dbReference type="PhylomeDB" id="Q23192"/>
<dbReference type="BRENDA" id="2.3.1.108">
    <property type="organism ID" value="1045"/>
</dbReference>
<dbReference type="PRO" id="PR:Q23192"/>
<dbReference type="Proteomes" id="UP000001940">
    <property type="component" value="Chromosome X"/>
</dbReference>
<dbReference type="Bgee" id="WBGene00021059">
    <property type="expression patterns" value="Expressed in pharyngeal muscle cell (C elegans) and 3 other cell types or tissues"/>
</dbReference>
<dbReference type="GO" id="GO:0005874">
    <property type="term" value="C:microtubule"/>
    <property type="evidence" value="ECO:0007669"/>
    <property type="project" value="InterPro"/>
</dbReference>
<dbReference type="GO" id="GO:0004468">
    <property type="term" value="F:L-lysine N-acetyltransferase activity, acting on acetyl phosphate as donor"/>
    <property type="evidence" value="ECO:0000250"/>
    <property type="project" value="WormBase"/>
</dbReference>
<dbReference type="GO" id="GO:0019799">
    <property type="term" value="F:tubulin N-acetyltransferase activity"/>
    <property type="evidence" value="ECO:0000315"/>
    <property type="project" value="UniProtKB"/>
</dbReference>
<dbReference type="GO" id="GO:0000226">
    <property type="term" value="P:microtubule cytoskeleton organization"/>
    <property type="evidence" value="ECO:0000318"/>
    <property type="project" value="GO_Central"/>
</dbReference>
<dbReference type="GO" id="GO:0048666">
    <property type="term" value="P:neuron development"/>
    <property type="evidence" value="ECO:0007669"/>
    <property type="project" value="UniProtKB-UniRule"/>
</dbReference>
<dbReference type="GO" id="GO:0070507">
    <property type="term" value="P:regulation of microtubule cytoskeleton organization"/>
    <property type="evidence" value="ECO:0007669"/>
    <property type="project" value="UniProtKB-UniRule"/>
</dbReference>
<dbReference type="GO" id="GO:0001966">
    <property type="term" value="P:thigmotaxis"/>
    <property type="evidence" value="ECO:0000315"/>
    <property type="project" value="WormBase"/>
</dbReference>
<dbReference type="Gene3D" id="3.40.630.30">
    <property type="match status" value="1"/>
</dbReference>
<dbReference type="HAMAP" id="MF_03130">
    <property type="entry name" value="mec17"/>
    <property type="match status" value="1"/>
</dbReference>
<dbReference type="InterPro" id="IPR038746">
    <property type="entry name" value="Atat"/>
</dbReference>
<dbReference type="InterPro" id="IPR007965">
    <property type="entry name" value="GNAT_ATAT"/>
</dbReference>
<dbReference type="PANTHER" id="PTHR12327">
    <property type="entry name" value="ALPHA-TUBULIN N-ACETYLTRANSFERASE 1"/>
    <property type="match status" value="1"/>
</dbReference>
<dbReference type="PANTHER" id="PTHR12327:SF1">
    <property type="entry name" value="ALPHA-TUBULIN N-ACETYLTRANSFERASE 2"/>
    <property type="match status" value="1"/>
</dbReference>
<dbReference type="Pfam" id="PF05301">
    <property type="entry name" value="Acetyltransf_16"/>
    <property type="match status" value="1"/>
</dbReference>
<dbReference type="PROSITE" id="PS51730">
    <property type="entry name" value="GNAT_ATAT"/>
    <property type="match status" value="1"/>
</dbReference>
<reference key="1">
    <citation type="journal article" date="1998" name="Science">
        <title>Genome sequence of the nematode C. elegans: a platform for investigating biology.</title>
        <authorList>
            <consortium name="The C. elegans sequencing consortium"/>
        </authorList>
    </citation>
    <scope>NUCLEOTIDE SEQUENCE [LARGE SCALE GENOMIC DNA]</scope>
    <source>
        <strain>Bristol N2</strain>
    </source>
</reference>
<reference key="2">
    <citation type="journal article" date="2010" name="Nature">
        <title>MEC-17 is an alpha-tubulin acetyltransferase.</title>
        <authorList>
            <person name="Akella J.S."/>
            <person name="Wloga D."/>
            <person name="Kim J."/>
            <person name="Starostina N.G."/>
            <person name="Lyons-Abbott S."/>
            <person name="Morrissette N.S."/>
            <person name="Dougan S.T."/>
            <person name="Kipreos E.T."/>
            <person name="Gaertig J."/>
        </authorList>
    </citation>
    <scope>FUNCTION</scope>
</reference>
<reference key="3">
    <citation type="journal article" date="2010" name="Proc. Natl. Acad. Sci. U.S.A.">
        <title>The major alpha-tubulin K40 acetyltransferase alphaTAT1 promotes rapid ciliogenesis and efficient mechanosensation.</title>
        <authorList>
            <person name="Shida T."/>
            <person name="Cueva J.G."/>
            <person name="Xu Z."/>
            <person name="Goodman M.B."/>
            <person name="Nachury M.V."/>
        </authorList>
    </citation>
    <scope>TISSUE SPECIFICITY</scope>
    <scope>DISRUPTION PHENOTYPE</scope>
</reference>
<protein>
    <recommendedName>
        <fullName evidence="1">Alpha-tubulin N-acetyltransferase 2</fullName>
        <shortName evidence="1">Alpha-TAT 2</shortName>
        <shortName evidence="1">TAT 2</shortName>
        <ecNumber evidence="1">2.3.1.108</ecNumber>
    </recommendedName>
    <alternativeName>
        <fullName>Mec-17-like protein</fullName>
    </alternativeName>
</protein>
<evidence type="ECO:0000255" key="1">
    <source>
        <dbReference type="HAMAP-Rule" id="MF_03130"/>
    </source>
</evidence>
<evidence type="ECO:0000256" key="2">
    <source>
        <dbReference type="SAM" id="MobiDB-lite"/>
    </source>
</evidence>
<evidence type="ECO:0000269" key="3">
    <source>
    </source>
</evidence>
<evidence type="ECO:0000269" key="4">
    <source>
    </source>
</evidence>
<evidence type="ECO:0007829" key="5">
    <source>
        <dbReference type="PDB" id="8YAL"/>
    </source>
</evidence>
<proteinExistence type="evidence at protein level"/>
<comment type="function">
    <text evidence="1 3">Specifically acetylates 'Lys-40' in alpha-tubulin/mec-12 on the lumenal side of microtubules. Promotes microtubule destabilization and accelerates microtubule dynamics; this activity may be independent of acetylation activity. Acetylates alpha-tubulin with a slow enzymatic rate, due to a catalytic site that is not optimized for acetyl transfer. Enters the microtubule through each end and diffuses quickly throughout the lumen of microtubules. Acetylates only long/old microtubules because of its slow acetylation rate since it does not have time to act on dynamically unstable microtubules before the enzyme is released. Required for the maintenance of touch receptor neurons and possibly other type of neurons involved in locomotion.</text>
</comment>
<comment type="catalytic activity">
    <reaction evidence="1">
        <text>L-lysyl-[alpha-tubulin] + acetyl-CoA = N(6)-acetyl-L-lysyl-[alpha-tubulin] + CoA + H(+)</text>
        <dbReference type="Rhea" id="RHEA:15277"/>
        <dbReference type="Rhea" id="RHEA-COMP:11278"/>
        <dbReference type="Rhea" id="RHEA-COMP:11279"/>
        <dbReference type="ChEBI" id="CHEBI:15378"/>
        <dbReference type="ChEBI" id="CHEBI:29969"/>
        <dbReference type="ChEBI" id="CHEBI:57287"/>
        <dbReference type="ChEBI" id="CHEBI:57288"/>
        <dbReference type="ChEBI" id="CHEBI:61930"/>
        <dbReference type="EC" id="2.3.1.108"/>
    </reaction>
</comment>
<comment type="tissue specificity">
    <text evidence="4">Expressed in touch receptor neurons and in a subset of ciliated neurons, including PDE, ADE, CEP, and OLQ neurons.</text>
</comment>
<comment type="disruption phenotype">
    <text evidence="4">Mutants move more slowly off food than wild-type animals, but retain the ability to slow when encountering a bacterial lawn. Mutants exhibit significantly reduced nose touch sensation and are partially insensitive to body touch.</text>
</comment>
<comment type="similarity">
    <text evidence="1">Belongs to the acetyltransferase ATAT1 family.</text>
</comment>
<organism>
    <name type="scientific">Caenorhabditis elegans</name>
    <dbReference type="NCBI Taxonomy" id="6239"/>
    <lineage>
        <taxon>Eukaryota</taxon>
        <taxon>Metazoa</taxon>
        <taxon>Ecdysozoa</taxon>
        <taxon>Nematoda</taxon>
        <taxon>Chromadorea</taxon>
        <taxon>Rhabditida</taxon>
        <taxon>Rhabditina</taxon>
        <taxon>Rhabditomorpha</taxon>
        <taxon>Rhabditoidea</taxon>
        <taxon>Rhabditidae</taxon>
        <taxon>Peloderinae</taxon>
        <taxon>Caenorhabditis</taxon>
    </lineage>
</organism>
<gene>
    <name type="primary">atat-2</name>
    <name type="ORF">W06B11.1</name>
</gene>
<keyword id="KW-0002">3D-structure</keyword>
<keyword id="KW-0012">Acyltransferase</keyword>
<keyword id="KW-1185">Reference proteome</keyword>
<keyword id="KW-0808">Transferase</keyword>
<feature type="chain" id="PRO_0000402076" description="Alpha-tubulin N-acetyltransferase 2">
    <location>
        <begin position="1"/>
        <end position="263"/>
    </location>
</feature>
<feature type="domain" description="N-acetyltransferase" evidence="1">
    <location>
        <begin position="1"/>
        <end position="181"/>
    </location>
</feature>
<feature type="region of interest" description="Disordered" evidence="2">
    <location>
        <begin position="191"/>
        <end position="223"/>
    </location>
</feature>
<feature type="region of interest" description="Disordered" evidence="2">
    <location>
        <begin position="242"/>
        <end position="263"/>
    </location>
</feature>
<feature type="compositionally biased region" description="Low complexity" evidence="2">
    <location>
        <begin position="200"/>
        <end position="212"/>
    </location>
</feature>
<feature type="compositionally biased region" description="Basic and acidic residues" evidence="2">
    <location>
        <begin position="253"/>
        <end position="263"/>
    </location>
</feature>
<feature type="binding site" evidence="1">
    <location>
        <begin position="115"/>
        <end position="128"/>
    </location>
    <ligand>
        <name>acetyl-CoA</name>
        <dbReference type="ChEBI" id="CHEBI:57288"/>
    </ligand>
</feature>
<feature type="strand" evidence="5">
    <location>
        <begin position="2"/>
        <end position="5"/>
    </location>
</feature>
<feature type="helix" evidence="5">
    <location>
        <begin position="7"/>
        <end position="9"/>
    </location>
</feature>
<feature type="strand" evidence="5">
    <location>
        <begin position="12"/>
        <end position="19"/>
    </location>
</feature>
<feature type="helix" evidence="5">
    <location>
        <begin position="20"/>
        <end position="25"/>
    </location>
</feature>
<feature type="turn" evidence="5">
    <location>
        <begin position="28"/>
        <end position="30"/>
    </location>
</feature>
<feature type="helix" evidence="5">
    <location>
        <begin position="32"/>
        <end position="49"/>
    </location>
</feature>
<feature type="helix" evidence="5">
    <location>
        <begin position="58"/>
        <end position="62"/>
    </location>
</feature>
<feature type="strand" evidence="5">
    <location>
        <begin position="69"/>
        <end position="78"/>
    </location>
</feature>
<feature type="strand" evidence="5">
    <location>
        <begin position="81"/>
        <end position="98"/>
    </location>
</feature>
<feature type="helix" evidence="5">
    <location>
        <begin position="100"/>
        <end position="102"/>
    </location>
</feature>
<feature type="strand" evidence="5">
    <location>
        <begin position="104"/>
        <end position="117"/>
    </location>
</feature>
<feature type="helix" evidence="5">
    <location>
        <begin position="119"/>
        <end position="121"/>
    </location>
</feature>
<feature type="turn" evidence="5">
    <location>
        <begin position="124"/>
        <end position="127"/>
    </location>
</feature>
<feature type="helix" evidence="5">
    <location>
        <begin position="128"/>
        <end position="138"/>
    </location>
</feature>
<feature type="helix" evidence="5">
    <location>
        <begin position="142"/>
        <end position="144"/>
    </location>
</feature>
<feature type="strand" evidence="5">
    <location>
        <begin position="145"/>
        <end position="149"/>
    </location>
</feature>
<feature type="helix" evidence="5">
    <location>
        <begin position="152"/>
        <end position="161"/>
    </location>
</feature>
<feature type="strand" evidence="5">
    <location>
        <begin position="173"/>
        <end position="176"/>
    </location>
</feature>
<feature type="helix" evidence="5">
    <location>
        <begin position="221"/>
        <end position="223"/>
    </location>
</feature>
<feature type="helix" evidence="5">
    <location>
        <begin position="226"/>
        <end position="231"/>
    </location>
</feature>
<feature type="helix" evidence="5">
    <location>
        <begin position="233"/>
        <end position="235"/>
    </location>
</feature>
<feature type="helix" evidence="5">
    <location>
        <begin position="248"/>
        <end position="255"/>
    </location>
</feature>